<feature type="chain" id="PRO_0000460862" description="Chitin synthase III">
    <location>
        <begin position="1"/>
        <end position="931"/>
    </location>
</feature>
<feature type="transmembrane region" description="Helical" evidence="1">
    <location>
        <begin position="585"/>
        <end position="605"/>
    </location>
</feature>
<feature type="transmembrane region" description="Helical" evidence="1">
    <location>
        <begin position="644"/>
        <end position="664"/>
    </location>
</feature>
<feature type="transmembrane region" description="Helical" evidence="1">
    <location>
        <begin position="677"/>
        <end position="697"/>
    </location>
</feature>
<feature type="transmembrane region" description="Helical" evidence="1">
    <location>
        <begin position="731"/>
        <end position="751"/>
    </location>
</feature>
<feature type="transmembrane region" description="Helical" evidence="1">
    <location>
        <begin position="759"/>
        <end position="779"/>
    </location>
</feature>
<feature type="transmembrane region" description="Helical" evidence="1">
    <location>
        <begin position="858"/>
        <end position="878"/>
    </location>
</feature>
<feature type="transmembrane region" description="Helical" evidence="1">
    <location>
        <begin position="899"/>
        <end position="919"/>
    </location>
</feature>
<feature type="region of interest" description="Disordered" evidence="3">
    <location>
        <begin position="93"/>
        <end position="154"/>
    </location>
</feature>
<feature type="compositionally biased region" description="Gly residues" evidence="3">
    <location>
        <begin position="102"/>
        <end position="122"/>
    </location>
</feature>
<feature type="glycosylation site" description="N-linked (GlcNAc...) asparagine" evidence="2">
    <location>
        <position position="37"/>
    </location>
</feature>
<feature type="glycosylation site" description="N-linked (GlcNAc...) asparagine" evidence="2">
    <location>
        <position position="94"/>
    </location>
</feature>
<feature type="glycosylation site" description="N-linked (GlcNAc...) asparagine" evidence="2">
    <location>
        <position position="558"/>
    </location>
</feature>
<feature type="glycosylation site" description="N-linked (GlcNAc...) asparagine" evidence="2">
    <location>
        <position position="802"/>
    </location>
</feature>
<sequence>MNTGDTPCKTSLRVTTWVDRSLHHLKLQTEFCMNMANRSHSQYHITPQDHDEDARGYLLNEPPAHGYDHDRLGVGTPPDRPVSAYSLTESYAPNASQLPPAGSGGFGDNGFGQYGQPQGFGGPYDRPLSAVHDEEESWMQRQQQPGGVGQAGGLRRYNTRKVKLVQGSVLSIDYPVPSAIKNAVQPRYRDVEGGNEEFMKMRYTAATCDPNDFTLKNGYDLRPRMYNRHTELLIAITYYNEDKVLLSRTLHGVMQNIRDIVNLKKSTFWNKGGPAWQKIVVCLVFDGIEKADKNTLDVLATVGVYQDGVIKKDVDGKETVAHIFEYTSQLSVTPSQQLIRPTGDSPQNLPPVQFIFCLKQKNSKKINSHRWLFNAFGRILNPEVTILIDAGTKPSPRSLLALWEGFYNDKDLGGACGEIHAMLGKGGKKLFNPLVAVQNFEYKISNILDKPLESSFGYVSVLPGAFSAYRFRAIMGRPLEQYFHGDHTLSKILGKKGIDGMNIFKKNMFLAEDRILCFELVAKAGQKWHLTYIKAAKGETDVPEGAAEFISQRRRWLNGSFAASLYSLMHFGRLYKSGHNIVRMFFLHIQVIYNVLNVIFSWFSLASYYLTTTVIMDLVGTPVVASSSAAEHHGWPFGDTATPIINALLKYLYLAFVILQFILALGNRPKGSKFTYIASFMVFGLIQGYILVLSGYLVARAFQQPISEQIKLDSSEDFVRSFFSGSSAGGVILIALITIYGLYFVASFLYLDPWHMFHSFPYYMLLMSTYINILMVYAFNNWHDVSWGTKGSDKAEALPSANVTKSEKNEVVVEEIEKEQEDIDSQFEQTVRRALAPFKEVEEIEKKDVEDSYKSFRTGLVVSWLFSNILLVVIITSDNFNSFGIGKSASVRTANFFKFLLYATAALSIVRFIGFLWFLGKTGLMCCFARR</sequence>
<name>CHS3_METAQ</name>
<proteinExistence type="evidence at transcript level"/>
<protein>
    <recommendedName>
        <fullName evidence="5">Chitin synthase III</fullName>
        <ecNumber evidence="7">2.4.1.16</ecNumber>
    </recommendedName>
    <alternativeName>
        <fullName evidence="6">Chitin-UDP acetyl-glucosaminyl transferase III</fullName>
    </alternativeName>
    <alternativeName>
        <fullName evidence="5">Class-III chitin synthase III</fullName>
    </alternativeName>
</protein>
<evidence type="ECO:0000255" key="1"/>
<evidence type="ECO:0000255" key="2">
    <source>
        <dbReference type="PROSITE-ProRule" id="PRU00498"/>
    </source>
</evidence>
<evidence type="ECO:0000256" key="3">
    <source>
        <dbReference type="SAM" id="MobiDB-lite"/>
    </source>
</evidence>
<evidence type="ECO:0000269" key="4">
    <source>
    </source>
</evidence>
<evidence type="ECO:0000303" key="5">
    <source>
    </source>
</evidence>
<evidence type="ECO:0000305" key="6"/>
<evidence type="ECO:0000305" key="7">
    <source>
    </source>
</evidence>
<dbReference type="EC" id="2.4.1.16" evidence="7"/>
<dbReference type="EMBL" id="GL698493">
    <property type="protein sequence ID" value="EFY90060.1"/>
    <property type="molecule type" value="Genomic_DNA"/>
</dbReference>
<dbReference type="RefSeq" id="XP_007810158.1">
    <property type="nucleotide sequence ID" value="XM_007811967.1"/>
</dbReference>
<dbReference type="SMR" id="E9E1W3"/>
<dbReference type="STRING" id="655827.E9E1W3"/>
<dbReference type="eggNOG" id="KOG2571">
    <property type="taxonomic scope" value="Eukaryota"/>
</dbReference>
<dbReference type="HOGENOM" id="CLU_004760_0_1_1"/>
<dbReference type="InParanoid" id="E9E1W3"/>
<dbReference type="OMA" id="WHLTYIK"/>
<dbReference type="OrthoDB" id="26569at2759"/>
<dbReference type="PHI-base" id="PHI:9491"/>
<dbReference type="Proteomes" id="UP000002499">
    <property type="component" value="Unassembled WGS sequence"/>
</dbReference>
<dbReference type="GO" id="GO:0030428">
    <property type="term" value="C:cell septum"/>
    <property type="evidence" value="ECO:0007669"/>
    <property type="project" value="TreeGrafter"/>
</dbReference>
<dbReference type="GO" id="GO:0005886">
    <property type="term" value="C:plasma membrane"/>
    <property type="evidence" value="ECO:0007669"/>
    <property type="project" value="UniProtKB-SubCell"/>
</dbReference>
<dbReference type="GO" id="GO:0004100">
    <property type="term" value="F:chitin synthase activity"/>
    <property type="evidence" value="ECO:0007669"/>
    <property type="project" value="UniProtKB-EC"/>
</dbReference>
<dbReference type="GO" id="GO:0071555">
    <property type="term" value="P:cell wall organization"/>
    <property type="evidence" value="ECO:0007669"/>
    <property type="project" value="UniProtKB-KW"/>
</dbReference>
<dbReference type="GO" id="GO:0006031">
    <property type="term" value="P:chitin biosynthetic process"/>
    <property type="evidence" value="ECO:0007669"/>
    <property type="project" value="InterPro"/>
</dbReference>
<dbReference type="CDD" id="cd04190">
    <property type="entry name" value="Chitin_synth_C"/>
    <property type="match status" value="1"/>
</dbReference>
<dbReference type="InterPro" id="IPR004835">
    <property type="entry name" value="Chitin_synth"/>
</dbReference>
<dbReference type="InterPro" id="IPR004834">
    <property type="entry name" value="Chitin_synth_fun"/>
</dbReference>
<dbReference type="InterPro" id="IPR013616">
    <property type="entry name" value="Chitin_synth_N"/>
</dbReference>
<dbReference type="InterPro" id="IPR029044">
    <property type="entry name" value="Nucleotide-diphossugar_trans"/>
</dbReference>
<dbReference type="PANTHER" id="PTHR22914">
    <property type="entry name" value="CHITIN SYNTHASE"/>
    <property type="match status" value="1"/>
</dbReference>
<dbReference type="PANTHER" id="PTHR22914:SF11">
    <property type="entry name" value="CHITIN SYNTHASE B"/>
    <property type="match status" value="1"/>
</dbReference>
<dbReference type="Pfam" id="PF01644">
    <property type="entry name" value="Chitin_synth_1"/>
    <property type="match status" value="1"/>
</dbReference>
<dbReference type="Pfam" id="PF08407">
    <property type="entry name" value="Chitin_synth_1N"/>
    <property type="match status" value="1"/>
</dbReference>
<dbReference type="SUPFAM" id="SSF53448">
    <property type="entry name" value="Nucleotide-diphospho-sugar transferases"/>
    <property type="match status" value="1"/>
</dbReference>
<organism>
    <name type="scientific">Metarhizium acridum (strain CQMa 102)</name>
    <dbReference type="NCBI Taxonomy" id="655827"/>
    <lineage>
        <taxon>Eukaryota</taxon>
        <taxon>Fungi</taxon>
        <taxon>Dikarya</taxon>
        <taxon>Ascomycota</taxon>
        <taxon>Pezizomycotina</taxon>
        <taxon>Sordariomycetes</taxon>
        <taxon>Hypocreomycetidae</taxon>
        <taxon>Hypocreales</taxon>
        <taxon>Clavicipitaceae</taxon>
        <taxon>Metarhizium</taxon>
    </lineage>
</organism>
<gene>
    <name evidence="5" type="primary">ChsIII</name>
    <name type="ORF">MAC_03818</name>
</gene>
<comment type="function">
    <text evidence="4 7">Polymerizes chitin, a structural polymer of the cell wall and septum, by transferring the sugar moiety of UDP-GlcNAc to the non-reducing end of the growing chitin polymer (Probable). Contributes to the production of conidia and the ability of fungal conidia to germinate (PubMed:31461507). Involved in the fungal cell wall integrity and the ability of conidia to withstand biophysical pressure (PubMed:31461507). Required for appressorium formation and evasion of insect cellular and/or humoral defenses, promoting the fungal dimorphic transition to the production of hyphal bodies that occurs within hosts, and ultimately to virulence (PubMed:31461507).</text>
</comment>
<comment type="catalytic activity">
    <reaction evidence="7">
        <text>[(1-&gt;4)-N-acetyl-beta-D-glucosaminyl](n) + UDP-N-acetyl-alpha-D-glucosamine = [(1-&gt;4)-N-acetyl-beta-D-glucosaminyl](n+1) + UDP + H(+)</text>
        <dbReference type="Rhea" id="RHEA:16637"/>
        <dbReference type="Rhea" id="RHEA-COMP:9593"/>
        <dbReference type="Rhea" id="RHEA-COMP:9595"/>
        <dbReference type="ChEBI" id="CHEBI:15378"/>
        <dbReference type="ChEBI" id="CHEBI:17029"/>
        <dbReference type="ChEBI" id="CHEBI:57705"/>
        <dbReference type="ChEBI" id="CHEBI:58223"/>
        <dbReference type="EC" id="2.4.1.16"/>
    </reaction>
    <physiologicalReaction direction="left-to-right" evidence="7">
        <dbReference type="Rhea" id="RHEA:16638"/>
    </physiologicalReaction>
</comment>
<comment type="subcellular location">
    <subcellularLocation>
        <location evidence="6">Cell membrane</location>
        <topology evidence="1">Multi-pass membrane protein</topology>
    </subcellularLocation>
</comment>
<comment type="tissue specificity">
    <text evidence="4">Highly expressed in conidia and during appressorium formation.</text>
</comment>
<comment type="disruption phenotype">
    <text evidence="4">Results in cell wall fragility and leads to delayed conidial germination (PubMed:31461507). Also leads to high sensitivities to heat and UV-B stress (PubMed:31461507). Impairs appressorium formation, affects growth of in insecta produced hyphal bodies, and alters the surface properties of conidia and hyphal bodies, resulting in defects in the ability of the mutant strains to evade insect immune responses (PubMed:31461507).</text>
</comment>
<comment type="similarity">
    <text evidence="6">Belongs to the chitin synthase family. Class III subfamily.</text>
</comment>
<accession>E9E1W3</accession>
<keyword id="KW-1003">Cell membrane</keyword>
<keyword id="KW-0961">Cell wall biogenesis/degradation</keyword>
<keyword id="KW-0325">Glycoprotein</keyword>
<keyword id="KW-0328">Glycosyltransferase</keyword>
<keyword id="KW-0472">Membrane</keyword>
<keyword id="KW-1185">Reference proteome</keyword>
<keyword id="KW-0808">Transferase</keyword>
<keyword id="KW-0812">Transmembrane</keyword>
<keyword id="KW-1133">Transmembrane helix</keyword>
<keyword id="KW-0843">Virulence</keyword>
<reference key="1">
    <citation type="journal article" date="2011" name="PLoS Genet.">
        <title>Genome sequencing and comparative transcriptomics of the model entomopathogenic fungi Metarhizium anisopliae and M. acridum.</title>
        <authorList>
            <person name="Gao Q."/>
            <person name="Jin K."/>
            <person name="Ying S.-H."/>
            <person name="Zhang Y."/>
            <person name="Xiao G."/>
            <person name="Shang Y."/>
            <person name="Duan Z."/>
            <person name="Hu X."/>
            <person name="Xie X.-Q."/>
            <person name="Zhou G."/>
            <person name="Peng G."/>
            <person name="Luo Z."/>
            <person name="Huang W."/>
            <person name="Wang B."/>
            <person name="Fang W."/>
            <person name="Wang S."/>
            <person name="Zhong Y."/>
            <person name="Ma L.-J."/>
            <person name="St Leger R.J."/>
            <person name="Zhao G.-P."/>
            <person name="Pei Y."/>
            <person name="Feng M.-G."/>
            <person name="Xia Y."/>
            <person name="Wang C."/>
        </authorList>
    </citation>
    <scope>NUCLEOTIDE SEQUENCE [LARGE SCALE GENOMIC DNA]</scope>
    <source>
        <strain>CQMa 102</strain>
    </source>
</reference>
<reference key="2">
    <citation type="journal article" date="2019" name="PLoS Pathog.">
        <title>Members of chitin synthase family in Metarhizium acridum differentially affect fungal growth, stress tolerances, cell wall integrity and virulence.</title>
        <authorList>
            <person name="Zhang J."/>
            <person name="Jiang H."/>
            <person name="Du Y."/>
            <person name="Keyhani N.O."/>
            <person name="Xia Y."/>
            <person name="Jin K."/>
        </authorList>
    </citation>
    <scope>FUNCTION</scope>
    <scope>DISRUPTION PHENOTYPE</scope>
    <scope>TISSUE SPECIFICITY</scope>
</reference>